<comment type="catalytic activity">
    <reaction evidence="1">
        <text>L-citrulline + L-aspartate + ATP = 2-(N(omega)-L-arginino)succinate + AMP + diphosphate + H(+)</text>
        <dbReference type="Rhea" id="RHEA:10932"/>
        <dbReference type="ChEBI" id="CHEBI:15378"/>
        <dbReference type="ChEBI" id="CHEBI:29991"/>
        <dbReference type="ChEBI" id="CHEBI:30616"/>
        <dbReference type="ChEBI" id="CHEBI:33019"/>
        <dbReference type="ChEBI" id="CHEBI:57472"/>
        <dbReference type="ChEBI" id="CHEBI:57743"/>
        <dbReference type="ChEBI" id="CHEBI:456215"/>
        <dbReference type="EC" id="6.3.4.5"/>
    </reaction>
</comment>
<comment type="pathway">
    <text evidence="1">Amino-acid biosynthesis; L-arginine biosynthesis; L-arginine from L-ornithine and carbamoyl phosphate: step 2/3.</text>
</comment>
<comment type="subunit">
    <text evidence="1">Homotetramer.</text>
</comment>
<comment type="subcellular location">
    <subcellularLocation>
        <location evidence="1">Cytoplasm</location>
    </subcellularLocation>
</comment>
<comment type="similarity">
    <text evidence="1">Belongs to the argininosuccinate synthase family. Type 2 subfamily.</text>
</comment>
<accession>B7LR40</accession>
<protein>
    <recommendedName>
        <fullName evidence="1">Argininosuccinate synthase</fullName>
        <ecNumber evidence="1">6.3.4.5</ecNumber>
    </recommendedName>
    <alternativeName>
        <fullName evidence="1">Citrulline--aspartate ligase</fullName>
    </alternativeName>
</protein>
<keyword id="KW-0028">Amino-acid biosynthesis</keyword>
<keyword id="KW-0055">Arginine biosynthesis</keyword>
<keyword id="KW-0067">ATP-binding</keyword>
<keyword id="KW-0963">Cytoplasm</keyword>
<keyword id="KW-0436">Ligase</keyword>
<keyword id="KW-0547">Nucleotide-binding</keyword>
<sequence>MTTILKHLPVGQRIGIAFSGGLDTSAALLWMRQKGAVPYAYTANLGQPDEEDYDAIPRRAMEYGAENARLIDCRKQLVAEGIAAIQCGAFHNTTGGLTYFNTTPLGRAVTGTMLVAAMKEDGVNIWGDGSTYKGNDIERFYRYGLLTNAELQIYKPWLDTDFIDELGGRHEMSEFMTACGFDYKMSVEKAYSTDSNMLGATHEAKDLEYLNSSVKIVNPIMGVKFWDESVKIPAEEVTVRFEQGHPVALNGKTFSDDVEMMLEANRIGGRHGLGMSDQIENRIIEAKSRGIYEAPGMALLHIAYERLLTGIHNEDTIEQYHAHGRQLGRLLYQGRWFDSQALMLRDSLQRWVASQITGEVTLELRRGNDYSILNTISNNLTYKPERLTMEKGDSVFSPDDRIGQLTMRNLDITDTREKLFGYAKTGLLSSSAASGVPQVENLENKAK</sequence>
<proteinExistence type="inferred from homology"/>
<organism>
    <name type="scientific">Escherichia fergusonii (strain ATCC 35469 / DSM 13698 / CCUG 18766 / IAM 14443 / JCM 21226 / LMG 7866 / NBRC 102419 / NCTC 12128 / CDC 0568-73)</name>
    <dbReference type="NCBI Taxonomy" id="585054"/>
    <lineage>
        <taxon>Bacteria</taxon>
        <taxon>Pseudomonadati</taxon>
        <taxon>Pseudomonadota</taxon>
        <taxon>Gammaproteobacteria</taxon>
        <taxon>Enterobacterales</taxon>
        <taxon>Enterobacteriaceae</taxon>
        <taxon>Escherichia</taxon>
    </lineage>
</organism>
<evidence type="ECO:0000255" key="1">
    <source>
        <dbReference type="HAMAP-Rule" id="MF_00581"/>
    </source>
</evidence>
<reference key="1">
    <citation type="journal article" date="2009" name="PLoS Genet.">
        <title>Organised genome dynamics in the Escherichia coli species results in highly diverse adaptive paths.</title>
        <authorList>
            <person name="Touchon M."/>
            <person name="Hoede C."/>
            <person name="Tenaillon O."/>
            <person name="Barbe V."/>
            <person name="Baeriswyl S."/>
            <person name="Bidet P."/>
            <person name="Bingen E."/>
            <person name="Bonacorsi S."/>
            <person name="Bouchier C."/>
            <person name="Bouvet O."/>
            <person name="Calteau A."/>
            <person name="Chiapello H."/>
            <person name="Clermont O."/>
            <person name="Cruveiller S."/>
            <person name="Danchin A."/>
            <person name="Diard M."/>
            <person name="Dossat C."/>
            <person name="Karoui M.E."/>
            <person name="Frapy E."/>
            <person name="Garry L."/>
            <person name="Ghigo J.M."/>
            <person name="Gilles A.M."/>
            <person name="Johnson J."/>
            <person name="Le Bouguenec C."/>
            <person name="Lescat M."/>
            <person name="Mangenot S."/>
            <person name="Martinez-Jehanne V."/>
            <person name="Matic I."/>
            <person name="Nassif X."/>
            <person name="Oztas S."/>
            <person name="Petit M.A."/>
            <person name="Pichon C."/>
            <person name="Rouy Z."/>
            <person name="Ruf C.S."/>
            <person name="Schneider D."/>
            <person name="Tourret J."/>
            <person name="Vacherie B."/>
            <person name="Vallenet D."/>
            <person name="Medigue C."/>
            <person name="Rocha E.P.C."/>
            <person name="Denamur E."/>
        </authorList>
    </citation>
    <scope>NUCLEOTIDE SEQUENCE [LARGE SCALE GENOMIC DNA]</scope>
    <source>
        <strain>ATCC 35469 / DSM 13698 / BCRC 15582 / CCUG 18766 / IAM 14443 / JCM 21226 / LMG 7866 / NBRC 102419 / NCTC 12128 / CDC 0568-73</strain>
    </source>
</reference>
<dbReference type="EC" id="6.3.4.5" evidence="1"/>
<dbReference type="EMBL" id="CU928158">
    <property type="protein sequence ID" value="CAQ90643.1"/>
    <property type="molecule type" value="Genomic_DNA"/>
</dbReference>
<dbReference type="RefSeq" id="WP_000207694.1">
    <property type="nucleotide sequence ID" value="NC_011740.1"/>
</dbReference>
<dbReference type="SMR" id="B7LR40"/>
<dbReference type="GeneID" id="75060233"/>
<dbReference type="KEGG" id="efe:EFER_3150"/>
<dbReference type="HOGENOM" id="CLU_032784_4_1_6"/>
<dbReference type="OrthoDB" id="9801641at2"/>
<dbReference type="UniPathway" id="UPA00068">
    <property type="reaction ID" value="UER00113"/>
</dbReference>
<dbReference type="Proteomes" id="UP000000745">
    <property type="component" value="Chromosome"/>
</dbReference>
<dbReference type="GO" id="GO:0005737">
    <property type="term" value="C:cytoplasm"/>
    <property type="evidence" value="ECO:0007669"/>
    <property type="project" value="UniProtKB-SubCell"/>
</dbReference>
<dbReference type="GO" id="GO:0004055">
    <property type="term" value="F:argininosuccinate synthase activity"/>
    <property type="evidence" value="ECO:0007669"/>
    <property type="project" value="UniProtKB-UniRule"/>
</dbReference>
<dbReference type="GO" id="GO:0005524">
    <property type="term" value="F:ATP binding"/>
    <property type="evidence" value="ECO:0007669"/>
    <property type="project" value="UniProtKB-UniRule"/>
</dbReference>
<dbReference type="GO" id="GO:0042803">
    <property type="term" value="F:protein homodimerization activity"/>
    <property type="evidence" value="ECO:0007669"/>
    <property type="project" value="InterPro"/>
</dbReference>
<dbReference type="GO" id="GO:0000053">
    <property type="term" value="P:argininosuccinate metabolic process"/>
    <property type="evidence" value="ECO:0007669"/>
    <property type="project" value="TreeGrafter"/>
</dbReference>
<dbReference type="GO" id="GO:0006526">
    <property type="term" value="P:L-arginine biosynthetic process"/>
    <property type="evidence" value="ECO:0007669"/>
    <property type="project" value="UniProtKB-UniRule"/>
</dbReference>
<dbReference type="GO" id="GO:0000050">
    <property type="term" value="P:urea cycle"/>
    <property type="evidence" value="ECO:0007669"/>
    <property type="project" value="TreeGrafter"/>
</dbReference>
<dbReference type="CDD" id="cd01999">
    <property type="entry name" value="ASS"/>
    <property type="match status" value="1"/>
</dbReference>
<dbReference type="FunFam" id="1.10.287.400:FF:000001">
    <property type="entry name" value="Argininosuccinate synthase"/>
    <property type="match status" value="1"/>
</dbReference>
<dbReference type="Gene3D" id="1.10.287.400">
    <property type="match status" value="1"/>
</dbReference>
<dbReference type="Gene3D" id="3.90.1260.10">
    <property type="entry name" value="Argininosuccinate synthetase, chain A, domain 2"/>
    <property type="match status" value="1"/>
</dbReference>
<dbReference type="Gene3D" id="3.40.50.620">
    <property type="entry name" value="HUPs"/>
    <property type="match status" value="1"/>
</dbReference>
<dbReference type="HAMAP" id="MF_00581">
    <property type="entry name" value="Arg_succ_synth_type2"/>
    <property type="match status" value="1"/>
</dbReference>
<dbReference type="InterPro" id="IPR023437">
    <property type="entry name" value="Arg_succ_synth_type2_subfam"/>
</dbReference>
<dbReference type="InterPro" id="IPR048268">
    <property type="entry name" value="Arginosuc_syn_C"/>
</dbReference>
<dbReference type="InterPro" id="IPR048267">
    <property type="entry name" value="Arginosuc_syn_N"/>
</dbReference>
<dbReference type="InterPro" id="IPR001518">
    <property type="entry name" value="Arginosuc_synth"/>
</dbReference>
<dbReference type="InterPro" id="IPR018223">
    <property type="entry name" value="Arginosuc_synth_CS"/>
</dbReference>
<dbReference type="InterPro" id="IPR023434">
    <property type="entry name" value="Arginosuc_synth_type_1_subfam"/>
</dbReference>
<dbReference type="InterPro" id="IPR024074">
    <property type="entry name" value="AS_cat/multimer_dom_body"/>
</dbReference>
<dbReference type="InterPro" id="IPR024073">
    <property type="entry name" value="AS_multimer_C_tail"/>
</dbReference>
<dbReference type="InterPro" id="IPR014729">
    <property type="entry name" value="Rossmann-like_a/b/a_fold"/>
</dbReference>
<dbReference type="NCBIfam" id="TIGR00032">
    <property type="entry name" value="argG"/>
    <property type="match status" value="1"/>
</dbReference>
<dbReference type="NCBIfam" id="NF003779">
    <property type="entry name" value="PRK05370.1"/>
    <property type="match status" value="1"/>
</dbReference>
<dbReference type="PANTHER" id="PTHR11587">
    <property type="entry name" value="ARGININOSUCCINATE SYNTHASE"/>
    <property type="match status" value="1"/>
</dbReference>
<dbReference type="PANTHER" id="PTHR11587:SF2">
    <property type="entry name" value="ARGININOSUCCINATE SYNTHASE"/>
    <property type="match status" value="1"/>
</dbReference>
<dbReference type="Pfam" id="PF20979">
    <property type="entry name" value="Arginosuc_syn_C"/>
    <property type="match status" value="1"/>
</dbReference>
<dbReference type="Pfam" id="PF00764">
    <property type="entry name" value="Arginosuc_synth"/>
    <property type="match status" value="1"/>
</dbReference>
<dbReference type="SUPFAM" id="SSF52402">
    <property type="entry name" value="Adenine nucleotide alpha hydrolases-like"/>
    <property type="match status" value="1"/>
</dbReference>
<dbReference type="SUPFAM" id="SSF69864">
    <property type="entry name" value="Argininosuccinate synthetase, C-terminal domain"/>
    <property type="match status" value="1"/>
</dbReference>
<dbReference type="PROSITE" id="PS00564">
    <property type="entry name" value="ARGININOSUCCIN_SYN_1"/>
    <property type="match status" value="1"/>
</dbReference>
<dbReference type="PROSITE" id="PS00565">
    <property type="entry name" value="ARGININOSUCCIN_SYN_2"/>
    <property type="match status" value="1"/>
</dbReference>
<gene>
    <name evidence="1" type="primary">argG</name>
    <name type="ordered locus">EFER_3150</name>
</gene>
<name>ASSY_ESCF3</name>
<feature type="chain" id="PRO_1000129753" description="Argininosuccinate synthase">
    <location>
        <begin position="1"/>
        <end position="447"/>
    </location>
</feature>
<feature type="binding site" evidence="1">
    <location>
        <begin position="17"/>
        <end position="25"/>
    </location>
    <ligand>
        <name>ATP</name>
        <dbReference type="ChEBI" id="CHEBI:30616"/>
    </ligand>
</feature>
<feature type="binding site" evidence="1">
    <location>
        <position position="43"/>
    </location>
    <ligand>
        <name>ATP</name>
        <dbReference type="ChEBI" id="CHEBI:30616"/>
    </ligand>
</feature>
<feature type="binding site" evidence="1">
    <location>
        <position position="99"/>
    </location>
    <ligand>
        <name>L-citrulline</name>
        <dbReference type="ChEBI" id="CHEBI:57743"/>
    </ligand>
</feature>
<feature type="binding site" evidence="1">
    <location>
        <position position="129"/>
    </location>
    <ligand>
        <name>ATP</name>
        <dbReference type="ChEBI" id="CHEBI:30616"/>
    </ligand>
</feature>
<feature type="binding site" evidence="1">
    <location>
        <position position="131"/>
    </location>
    <ligand>
        <name>ATP</name>
        <dbReference type="ChEBI" id="CHEBI:30616"/>
    </ligand>
</feature>
<feature type="binding site" evidence="1">
    <location>
        <position position="131"/>
    </location>
    <ligand>
        <name>L-aspartate</name>
        <dbReference type="ChEBI" id="CHEBI:29991"/>
    </ligand>
</feature>
<feature type="binding site" evidence="1">
    <location>
        <position position="135"/>
    </location>
    <ligand>
        <name>L-aspartate</name>
        <dbReference type="ChEBI" id="CHEBI:29991"/>
    </ligand>
</feature>
<feature type="binding site" evidence="1">
    <location>
        <position position="135"/>
    </location>
    <ligand>
        <name>L-citrulline</name>
        <dbReference type="ChEBI" id="CHEBI:57743"/>
    </ligand>
</feature>
<feature type="binding site" evidence="1">
    <location>
        <position position="136"/>
    </location>
    <ligand>
        <name>ATP</name>
        <dbReference type="ChEBI" id="CHEBI:30616"/>
    </ligand>
</feature>
<feature type="binding site" evidence="1">
    <location>
        <position position="136"/>
    </location>
    <ligand>
        <name>L-aspartate</name>
        <dbReference type="ChEBI" id="CHEBI:29991"/>
    </ligand>
</feature>
<feature type="binding site" evidence="1">
    <location>
        <position position="139"/>
    </location>
    <ligand>
        <name>L-citrulline</name>
        <dbReference type="ChEBI" id="CHEBI:57743"/>
    </ligand>
</feature>
<feature type="binding site" evidence="1">
    <location>
        <position position="192"/>
    </location>
    <ligand>
        <name>L-citrulline</name>
        <dbReference type="ChEBI" id="CHEBI:57743"/>
    </ligand>
</feature>
<feature type="binding site" evidence="1">
    <location>
        <position position="194"/>
    </location>
    <ligand>
        <name>ATP</name>
        <dbReference type="ChEBI" id="CHEBI:30616"/>
    </ligand>
</feature>
<feature type="binding site" evidence="1">
    <location>
        <position position="201"/>
    </location>
    <ligand>
        <name>L-citrulline</name>
        <dbReference type="ChEBI" id="CHEBI:57743"/>
    </ligand>
</feature>
<feature type="binding site" evidence="1">
    <location>
        <position position="203"/>
    </location>
    <ligand>
        <name>L-citrulline</name>
        <dbReference type="ChEBI" id="CHEBI:57743"/>
    </ligand>
</feature>
<feature type="binding site" evidence="1">
    <location>
        <position position="280"/>
    </location>
    <ligand>
        <name>L-citrulline</name>
        <dbReference type="ChEBI" id="CHEBI:57743"/>
    </ligand>
</feature>